<organism>
    <name type="scientific">Bartonella bacilliformis (strain ATCC 35685 / KC583 / Herrer 020/F12,63)</name>
    <dbReference type="NCBI Taxonomy" id="360095"/>
    <lineage>
        <taxon>Bacteria</taxon>
        <taxon>Pseudomonadati</taxon>
        <taxon>Pseudomonadota</taxon>
        <taxon>Alphaproteobacteria</taxon>
        <taxon>Hyphomicrobiales</taxon>
        <taxon>Bartonellaceae</taxon>
        <taxon>Bartonella</taxon>
    </lineage>
</organism>
<name>DAPB_BARBK</name>
<evidence type="ECO:0000255" key="1">
    <source>
        <dbReference type="HAMAP-Rule" id="MF_00102"/>
    </source>
</evidence>
<evidence type="ECO:0000305" key="2"/>
<protein>
    <recommendedName>
        <fullName evidence="1">4-hydroxy-tetrahydrodipicolinate reductase</fullName>
        <shortName evidence="1">HTPA reductase</shortName>
        <ecNumber evidence="1">1.17.1.8</ecNumber>
    </recommendedName>
</protein>
<sequence>MRLVVVGANGRMGRELITACQNREDIELSGVLVREKSPFVGQDVSILIGSAPLGIRITDDPENAFSNADGIVDFSQPQASVIHADYAAQKGLVHIIGTTGFSKEEDAQIAISATRTTIVKSENMSLGVNLLANFVKKAAKALGAHDFDIEICEMHHSKKVDAPSGTALLLGNAAAEGRHVALKEVSASGRNGYTGERKKGTIGFACLRGGTVIGDHSVIFAGLNERITFSHSAQERSIFAHGALKAALWAKNYKNGLYSMLDVLELNN</sequence>
<keyword id="KW-0028">Amino-acid biosynthesis</keyword>
<keyword id="KW-0963">Cytoplasm</keyword>
<keyword id="KW-0220">Diaminopimelate biosynthesis</keyword>
<keyword id="KW-0457">Lysine biosynthesis</keyword>
<keyword id="KW-0520">NAD</keyword>
<keyword id="KW-0521">NADP</keyword>
<keyword id="KW-0560">Oxidoreductase</keyword>
<reference key="1">
    <citation type="submission" date="2006-12" db="EMBL/GenBank/DDBJ databases">
        <authorList>
            <person name="Hendrix L."/>
            <person name="Mohamoud Y."/>
            <person name="Radune D."/>
            <person name="Shvartsbeyn A."/>
            <person name="Daugherty S."/>
            <person name="Dodson R."/>
            <person name="Durkin A.S."/>
            <person name="Harkins D."/>
            <person name="Huot H."/>
            <person name="Kothari S.P."/>
            <person name="Madupu R."/>
            <person name="Li J."/>
            <person name="Nelson W.C."/>
            <person name="Shrivastava S."/>
            <person name="Giglio M.G."/>
            <person name="Haft D."/>
            <person name="Selengut J."/>
            <person name="Fraser-Ligget C."/>
            <person name="Seshadri R."/>
        </authorList>
    </citation>
    <scope>NUCLEOTIDE SEQUENCE [LARGE SCALE GENOMIC DNA]</scope>
    <source>
        <strain>ATCC 35685 / KC583 / Herrer 020/F12,63</strain>
    </source>
</reference>
<comment type="function">
    <text evidence="1">Catalyzes the conversion of 4-hydroxy-tetrahydrodipicolinate (HTPA) to tetrahydrodipicolinate.</text>
</comment>
<comment type="catalytic activity">
    <reaction evidence="1">
        <text>(S)-2,3,4,5-tetrahydrodipicolinate + NAD(+) + H2O = (2S,4S)-4-hydroxy-2,3,4,5-tetrahydrodipicolinate + NADH + H(+)</text>
        <dbReference type="Rhea" id="RHEA:35323"/>
        <dbReference type="ChEBI" id="CHEBI:15377"/>
        <dbReference type="ChEBI" id="CHEBI:15378"/>
        <dbReference type="ChEBI" id="CHEBI:16845"/>
        <dbReference type="ChEBI" id="CHEBI:57540"/>
        <dbReference type="ChEBI" id="CHEBI:57945"/>
        <dbReference type="ChEBI" id="CHEBI:67139"/>
        <dbReference type="EC" id="1.17.1.8"/>
    </reaction>
</comment>
<comment type="catalytic activity">
    <reaction evidence="1">
        <text>(S)-2,3,4,5-tetrahydrodipicolinate + NADP(+) + H2O = (2S,4S)-4-hydroxy-2,3,4,5-tetrahydrodipicolinate + NADPH + H(+)</text>
        <dbReference type="Rhea" id="RHEA:35331"/>
        <dbReference type="ChEBI" id="CHEBI:15377"/>
        <dbReference type="ChEBI" id="CHEBI:15378"/>
        <dbReference type="ChEBI" id="CHEBI:16845"/>
        <dbReference type="ChEBI" id="CHEBI:57783"/>
        <dbReference type="ChEBI" id="CHEBI:58349"/>
        <dbReference type="ChEBI" id="CHEBI:67139"/>
        <dbReference type="EC" id="1.17.1.8"/>
    </reaction>
</comment>
<comment type="pathway">
    <text evidence="1">Amino-acid biosynthesis; L-lysine biosynthesis via DAP pathway; (S)-tetrahydrodipicolinate from L-aspartate: step 4/4.</text>
</comment>
<comment type="subcellular location">
    <subcellularLocation>
        <location evidence="1">Cytoplasm</location>
    </subcellularLocation>
</comment>
<comment type="similarity">
    <text evidence="1">Belongs to the DapB family.</text>
</comment>
<comment type="caution">
    <text evidence="2">Was originally thought to be a dihydrodipicolinate reductase (DHDPR), catalyzing the conversion of dihydrodipicolinate to tetrahydrodipicolinate. However, it was shown in E.coli that the substrate of the enzymatic reaction is not dihydrodipicolinate (DHDP) but in fact (2S,4S)-4-hydroxy-2,3,4,5-tetrahydrodipicolinic acid (HTPA), the product released by the DapA-catalyzed reaction.</text>
</comment>
<dbReference type="EC" id="1.17.1.8" evidence="1"/>
<dbReference type="EMBL" id="CP000524">
    <property type="protein sequence ID" value="ABM44744.1"/>
    <property type="molecule type" value="Genomic_DNA"/>
</dbReference>
<dbReference type="RefSeq" id="WP_005767613.1">
    <property type="nucleotide sequence ID" value="NC_008783.1"/>
</dbReference>
<dbReference type="SMR" id="A1UTM3"/>
<dbReference type="STRING" id="360095.BARBAKC583_1051"/>
<dbReference type="GeneID" id="4684201"/>
<dbReference type="KEGG" id="bbk:BARBAKC583_1051"/>
<dbReference type="PATRIC" id="fig|360095.6.peg.1020"/>
<dbReference type="eggNOG" id="COG0289">
    <property type="taxonomic scope" value="Bacteria"/>
</dbReference>
<dbReference type="HOGENOM" id="CLU_047479_2_1_5"/>
<dbReference type="OrthoDB" id="9790352at2"/>
<dbReference type="UniPathway" id="UPA00034">
    <property type="reaction ID" value="UER00018"/>
</dbReference>
<dbReference type="Proteomes" id="UP000000643">
    <property type="component" value="Chromosome"/>
</dbReference>
<dbReference type="GO" id="GO:0005829">
    <property type="term" value="C:cytosol"/>
    <property type="evidence" value="ECO:0007669"/>
    <property type="project" value="TreeGrafter"/>
</dbReference>
<dbReference type="GO" id="GO:0008839">
    <property type="term" value="F:4-hydroxy-tetrahydrodipicolinate reductase"/>
    <property type="evidence" value="ECO:0007669"/>
    <property type="project" value="UniProtKB-EC"/>
</dbReference>
<dbReference type="GO" id="GO:0051287">
    <property type="term" value="F:NAD binding"/>
    <property type="evidence" value="ECO:0007669"/>
    <property type="project" value="UniProtKB-UniRule"/>
</dbReference>
<dbReference type="GO" id="GO:0050661">
    <property type="term" value="F:NADP binding"/>
    <property type="evidence" value="ECO:0007669"/>
    <property type="project" value="UniProtKB-UniRule"/>
</dbReference>
<dbReference type="GO" id="GO:0016726">
    <property type="term" value="F:oxidoreductase activity, acting on CH or CH2 groups, NAD or NADP as acceptor"/>
    <property type="evidence" value="ECO:0007669"/>
    <property type="project" value="UniProtKB-UniRule"/>
</dbReference>
<dbReference type="GO" id="GO:0019877">
    <property type="term" value="P:diaminopimelate biosynthetic process"/>
    <property type="evidence" value="ECO:0007669"/>
    <property type="project" value="UniProtKB-UniRule"/>
</dbReference>
<dbReference type="GO" id="GO:0009089">
    <property type="term" value="P:lysine biosynthetic process via diaminopimelate"/>
    <property type="evidence" value="ECO:0007669"/>
    <property type="project" value="UniProtKB-UniRule"/>
</dbReference>
<dbReference type="CDD" id="cd02274">
    <property type="entry name" value="DHDPR_N"/>
    <property type="match status" value="1"/>
</dbReference>
<dbReference type="FunFam" id="3.30.360.10:FF:000004">
    <property type="entry name" value="4-hydroxy-tetrahydrodipicolinate reductase"/>
    <property type="match status" value="1"/>
</dbReference>
<dbReference type="Gene3D" id="3.30.360.10">
    <property type="entry name" value="Dihydrodipicolinate Reductase, domain 2"/>
    <property type="match status" value="1"/>
</dbReference>
<dbReference type="Gene3D" id="3.40.50.720">
    <property type="entry name" value="NAD(P)-binding Rossmann-like Domain"/>
    <property type="match status" value="1"/>
</dbReference>
<dbReference type="HAMAP" id="MF_00102">
    <property type="entry name" value="DapB"/>
    <property type="match status" value="1"/>
</dbReference>
<dbReference type="InterPro" id="IPR022663">
    <property type="entry name" value="DapB_C"/>
</dbReference>
<dbReference type="InterPro" id="IPR000846">
    <property type="entry name" value="DapB_N"/>
</dbReference>
<dbReference type="InterPro" id="IPR022664">
    <property type="entry name" value="DapB_N_CS"/>
</dbReference>
<dbReference type="InterPro" id="IPR023940">
    <property type="entry name" value="DHDPR_bac"/>
</dbReference>
<dbReference type="InterPro" id="IPR036291">
    <property type="entry name" value="NAD(P)-bd_dom_sf"/>
</dbReference>
<dbReference type="NCBIfam" id="TIGR00036">
    <property type="entry name" value="dapB"/>
    <property type="match status" value="1"/>
</dbReference>
<dbReference type="PANTHER" id="PTHR20836:SF0">
    <property type="entry name" value="4-HYDROXY-TETRAHYDRODIPICOLINATE REDUCTASE 1, CHLOROPLASTIC-RELATED"/>
    <property type="match status" value="1"/>
</dbReference>
<dbReference type="PANTHER" id="PTHR20836">
    <property type="entry name" value="DIHYDRODIPICOLINATE REDUCTASE"/>
    <property type="match status" value="1"/>
</dbReference>
<dbReference type="Pfam" id="PF05173">
    <property type="entry name" value="DapB_C"/>
    <property type="match status" value="1"/>
</dbReference>
<dbReference type="Pfam" id="PF01113">
    <property type="entry name" value="DapB_N"/>
    <property type="match status" value="1"/>
</dbReference>
<dbReference type="PIRSF" id="PIRSF000161">
    <property type="entry name" value="DHPR"/>
    <property type="match status" value="1"/>
</dbReference>
<dbReference type="SUPFAM" id="SSF55347">
    <property type="entry name" value="Glyceraldehyde-3-phosphate dehydrogenase-like, C-terminal domain"/>
    <property type="match status" value="1"/>
</dbReference>
<dbReference type="SUPFAM" id="SSF51735">
    <property type="entry name" value="NAD(P)-binding Rossmann-fold domains"/>
    <property type="match status" value="1"/>
</dbReference>
<dbReference type="PROSITE" id="PS01298">
    <property type="entry name" value="DAPB"/>
    <property type="match status" value="1"/>
</dbReference>
<proteinExistence type="inferred from homology"/>
<gene>
    <name evidence="1" type="primary">dapB</name>
    <name type="ordered locus">BARBAKC583_1051</name>
</gene>
<feature type="chain" id="PRO_1000008536" description="4-hydroxy-tetrahydrodipicolinate reductase">
    <location>
        <begin position="1"/>
        <end position="268"/>
    </location>
</feature>
<feature type="active site" description="Proton donor/acceptor" evidence="1">
    <location>
        <position position="155"/>
    </location>
</feature>
<feature type="active site" description="Proton donor" evidence="1">
    <location>
        <position position="159"/>
    </location>
</feature>
<feature type="binding site" evidence="1">
    <location>
        <begin position="7"/>
        <end position="12"/>
    </location>
    <ligand>
        <name>NAD(+)</name>
        <dbReference type="ChEBI" id="CHEBI:57540"/>
    </ligand>
</feature>
<feature type="binding site" evidence="1">
    <location>
        <position position="34"/>
    </location>
    <ligand>
        <name>NADP(+)</name>
        <dbReference type="ChEBI" id="CHEBI:58349"/>
    </ligand>
</feature>
<feature type="binding site" evidence="1">
    <location>
        <begin position="97"/>
        <end position="99"/>
    </location>
    <ligand>
        <name>NAD(+)</name>
        <dbReference type="ChEBI" id="CHEBI:57540"/>
    </ligand>
</feature>
<feature type="binding site" evidence="1">
    <location>
        <begin position="121"/>
        <end position="124"/>
    </location>
    <ligand>
        <name>NAD(+)</name>
        <dbReference type="ChEBI" id="CHEBI:57540"/>
    </ligand>
</feature>
<feature type="binding site" evidence="1">
    <location>
        <position position="156"/>
    </location>
    <ligand>
        <name>(S)-2,3,4,5-tetrahydrodipicolinate</name>
        <dbReference type="ChEBI" id="CHEBI:16845"/>
    </ligand>
</feature>
<feature type="binding site" evidence="1">
    <location>
        <begin position="165"/>
        <end position="166"/>
    </location>
    <ligand>
        <name>(S)-2,3,4,5-tetrahydrodipicolinate</name>
        <dbReference type="ChEBI" id="CHEBI:16845"/>
    </ligand>
</feature>
<accession>A1UTM3</accession>